<dbReference type="EC" id="1.2.1.38" evidence="1"/>
<dbReference type="EMBL" id="CP001154">
    <property type="protein sequence ID" value="ACO73929.1"/>
    <property type="molecule type" value="Genomic_DNA"/>
</dbReference>
<dbReference type="RefSeq" id="WP_012696420.1">
    <property type="nucleotide sequence ID" value="NC_012559.1"/>
</dbReference>
<dbReference type="SMR" id="C1D5B2"/>
<dbReference type="STRING" id="557598.LHK_00937"/>
<dbReference type="GeneID" id="75109129"/>
<dbReference type="KEGG" id="lhk:LHK_00937"/>
<dbReference type="eggNOG" id="COG0002">
    <property type="taxonomic scope" value="Bacteria"/>
</dbReference>
<dbReference type="HOGENOM" id="CLU_006384_0_1_4"/>
<dbReference type="UniPathway" id="UPA00068">
    <property type="reaction ID" value="UER00108"/>
</dbReference>
<dbReference type="Proteomes" id="UP000002010">
    <property type="component" value="Chromosome"/>
</dbReference>
<dbReference type="GO" id="GO:0005737">
    <property type="term" value="C:cytoplasm"/>
    <property type="evidence" value="ECO:0007669"/>
    <property type="project" value="UniProtKB-SubCell"/>
</dbReference>
<dbReference type="GO" id="GO:0003942">
    <property type="term" value="F:N-acetyl-gamma-glutamyl-phosphate reductase activity"/>
    <property type="evidence" value="ECO:0007669"/>
    <property type="project" value="UniProtKB-UniRule"/>
</dbReference>
<dbReference type="GO" id="GO:0051287">
    <property type="term" value="F:NAD binding"/>
    <property type="evidence" value="ECO:0007669"/>
    <property type="project" value="InterPro"/>
</dbReference>
<dbReference type="GO" id="GO:0070401">
    <property type="term" value="F:NADP+ binding"/>
    <property type="evidence" value="ECO:0007669"/>
    <property type="project" value="InterPro"/>
</dbReference>
<dbReference type="GO" id="GO:0006526">
    <property type="term" value="P:L-arginine biosynthetic process"/>
    <property type="evidence" value="ECO:0007669"/>
    <property type="project" value="UniProtKB-UniRule"/>
</dbReference>
<dbReference type="CDD" id="cd23934">
    <property type="entry name" value="AGPR_1_C"/>
    <property type="match status" value="1"/>
</dbReference>
<dbReference type="CDD" id="cd17895">
    <property type="entry name" value="AGPR_1_N"/>
    <property type="match status" value="1"/>
</dbReference>
<dbReference type="FunFam" id="3.30.360.10:FF:000014">
    <property type="entry name" value="N-acetyl-gamma-glutamyl-phosphate reductase"/>
    <property type="match status" value="1"/>
</dbReference>
<dbReference type="Gene3D" id="3.30.360.10">
    <property type="entry name" value="Dihydrodipicolinate Reductase, domain 2"/>
    <property type="match status" value="1"/>
</dbReference>
<dbReference type="Gene3D" id="3.40.50.720">
    <property type="entry name" value="NAD(P)-binding Rossmann-like Domain"/>
    <property type="match status" value="1"/>
</dbReference>
<dbReference type="HAMAP" id="MF_00150">
    <property type="entry name" value="ArgC_type1"/>
    <property type="match status" value="1"/>
</dbReference>
<dbReference type="InterPro" id="IPR023013">
    <property type="entry name" value="AGPR_AS"/>
</dbReference>
<dbReference type="InterPro" id="IPR000706">
    <property type="entry name" value="AGPR_type-1"/>
</dbReference>
<dbReference type="InterPro" id="IPR036291">
    <property type="entry name" value="NAD(P)-bd_dom_sf"/>
</dbReference>
<dbReference type="InterPro" id="IPR050085">
    <property type="entry name" value="NAGSA_dehydrogenase"/>
</dbReference>
<dbReference type="InterPro" id="IPR000534">
    <property type="entry name" value="Semialdehyde_DH_NAD-bd"/>
</dbReference>
<dbReference type="NCBIfam" id="TIGR01850">
    <property type="entry name" value="argC"/>
    <property type="match status" value="1"/>
</dbReference>
<dbReference type="PANTHER" id="PTHR32338:SF10">
    <property type="entry name" value="N-ACETYL-GAMMA-GLUTAMYL-PHOSPHATE REDUCTASE, CHLOROPLASTIC-RELATED"/>
    <property type="match status" value="1"/>
</dbReference>
<dbReference type="PANTHER" id="PTHR32338">
    <property type="entry name" value="N-ACETYL-GAMMA-GLUTAMYL-PHOSPHATE REDUCTASE, CHLOROPLASTIC-RELATED-RELATED"/>
    <property type="match status" value="1"/>
</dbReference>
<dbReference type="Pfam" id="PF01118">
    <property type="entry name" value="Semialdhyde_dh"/>
    <property type="match status" value="1"/>
</dbReference>
<dbReference type="Pfam" id="PF22698">
    <property type="entry name" value="Semialdhyde_dhC_1"/>
    <property type="match status" value="1"/>
</dbReference>
<dbReference type="SMART" id="SM00859">
    <property type="entry name" value="Semialdhyde_dh"/>
    <property type="match status" value="1"/>
</dbReference>
<dbReference type="SUPFAM" id="SSF55347">
    <property type="entry name" value="Glyceraldehyde-3-phosphate dehydrogenase-like, C-terminal domain"/>
    <property type="match status" value="1"/>
</dbReference>
<dbReference type="SUPFAM" id="SSF51735">
    <property type="entry name" value="NAD(P)-binding Rossmann-fold domains"/>
    <property type="match status" value="1"/>
</dbReference>
<dbReference type="PROSITE" id="PS01224">
    <property type="entry name" value="ARGC"/>
    <property type="match status" value="1"/>
</dbReference>
<evidence type="ECO:0000255" key="1">
    <source>
        <dbReference type="HAMAP-Rule" id="MF_00150"/>
    </source>
</evidence>
<comment type="function">
    <text evidence="1">Catalyzes the NADPH-dependent reduction of N-acetyl-5-glutamyl phosphate to yield N-acetyl-L-glutamate 5-semialdehyde.</text>
</comment>
<comment type="catalytic activity">
    <reaction evidence="1">
        <text>N-acetyl-L-glutamate 5-semialdehyde + phosphate + NADP(+) = N-acetyl-L-glutamyl 5-phosphate + NADPH + H(+)</text>
        <dbReference type="Rhea" id="RHEA:21588"/>
        <dbReference type="ChEBI" id="CHEBI:15378"/>
        <dbReference type="ChEBI" id="CHEBI:29123"/>
        <dbReference type="ChEBI" id="CHEBI:43474"/>
        <dbReference type="ChEBI" id="CHEBI:57783"/>
        <dbReference type="ChEBI" id="CHEBI:57936"/>
        <dbReference type="ChEBI" id="CHEBI:58349"/>
        <dbReference type="EC" id="1.2.1.38"/>
    </reaction>
</comment>
<comment type="pathway">
    <text evidence="1">Amino-acid biosynthesis; L-arginine biosynthesis; N(2)-acetyl-L-ornithine from L-glutamate: step 3/4.</text>
</comment>
<comment type="subcellular location">
    <subcellularLocation>
        <location evidence="1">Cytoplasm</location>
    </subcellularLocation>
</comment>
<comment type="similarity">
    <text evidence="1">Belongs to the NAGSA dehydrogenase family. Type 1 subfamily.</text>
</comment>
<proteinExistence type="inferred from homology"/>
<reference key="1">
    <citation type="journal article" date="2009" name="PLoS Genet.">
        <title>The complete genome and proteome of Laribacter hongkongensis reveal potential mechanisms for adaptations to different temperatures and habitats.</title>
        <authorList>
            <person name="Woo P.C.Y."/>
            <person name="Lau S.K.P."/>
            <person name="Tse H."/>
            <person name="Teng J.L.L."/>
            <person name="Curreem S.O."/>
            <person name="Tsang A.K.L."/>
            <person name="Fan R.Y.Y."/>
            <person name="Wong G.K.M."/>
            <person name="Huang Y."/>
            <person name="Loman N.J."/>
            <person name="Snyder L.A.S."/>
            <person name="Cai J.J."/>
            <person name="Huang J.-D."/>
            <person name="Mak W."/>
            <person name="Pallen M.J."/>
            <person name="Lok S."/>
            <person name="Yuen K.-Y."/>
        </authorList>
    </citation>
    <scope>NUCLEOTIDE SEQUENCE [LARGE SCALE GENOMIC DNA]</scope>
    <source>
        <strain>HLHK9</strain>
    </source>
</reference>
<sequence>MIKVGIVGGTGYTGVELLRLLSRHPDVELTAITSRKEAGLRVDAMYPSLRGWVDLAFTTPDEANLAGCDVVFFATPNGIAMQEAVRLVEAGVRVIDLAADFRIKDIAEWEKWYGMTHASPQLVAEAVYGLPEINRDAVRTARVVANPGCYPTAVQLGFLPLIEAEAIDPASLIADCKSGVSGAGRKAEVHTLFAEATDSFKAYGVAGHRHLPEIRQGLAAVAGQPVGLTFVPHLTPMVRGIHATLYARLKKDVDLQGLFESRYAGERFVDVLPAGSCPETRSVRGSNTCRIAVHRPQGSDTVVVLSVIDNLVKGAAGQAVQNLNLMFGLPESTGLEIVPLMP</sequence>
<protein>
    <recommendedName>
        <fullName evidence="1">N-acetyl-gamma-glutamyl-phosphate reductase</fullName>
        <shortName evidence="1">AGPR</shortName>
        <ecNumber evidence="1">1.2.1.38</ecNumber>
    </recommendedName>
    <alternativeName>
        <fullName evidence="1">N-acetyl-glutamate semialdehyde dehydrogenase</fullName>
        <shortName evidence="1">NAGSA dehydrogenase</shortName>
    </alternativeName>
</protein>
<organism>
    <name type="scientific">Laribacter hongkongensis (strain HLHK9)</name>
    <dbReference type="NCBI Taxonomy" id="557598"/>
    <lineage>
        <taxon>Bacteria</taxon>
        <taxon>Pseudomonadati</taxon>
        <taxon>Pseudomonadota</taxon>
        <taxon>Betaproteobacteria</taxon>
        <taxon>Neisseriales</taxon>
        <taxon>Aquaspirillaceae</taxon>
        <taxon>Laribacter</taxon>
    </lineage>
</organism>
<feature type="chain" id="PRO_1000123243" description="N-acetyl-gamma-glutamyl-phosphate reductase">
    <location>
        <begin position="1"/>
        <end position="342"/>
    </location>
</feature>
<feature type="active site" evidence="1">
    <location>
        <position position="149"/>
    </location>
</feature>
<gene>
    <name evidence="1" type="primary">argC</name>
    <name type="ordered locus">LHK_00937</name>
</gene>
<name>ARGC_LARHH</name>
<keyword id="KW-0028">Amino-acid biosynthesis</keyword>
<keyword id="KW-0055">Arginine biosynthesis</keyword>
<keyword id="KW-0963">Cytoplasm</keyword>
<keyword id="KW-0521">NADP</keyword>
<keyword id="KW-0560">Oxidoreductase</keyword>
<keyword id="KW-1185">Reference proteome</keyword>
<accession>C1D5B2</accession>